<keyword id="KW-1185">Reference proteome</keyword>
<keyword id="KW-0687">Ribonucleoprotein</keyword>
<keyword id="KW-0689">Ribosomal protein</keyword>
<comment type="similarity">
    <text evidence="1">Belongs to the bacterial ribosomal protein bL34 family.</text>
</comment>
<accession>Q67J28</accession>
<evidence type="ECO:0000255" key="1">
    <source>
        <dbReference type="HAMAP-Rule" id="MF_00391"/>
    </source>
</evidence>
<evidence type="ECO:0000256" key="2">
    <source>
        <dbReference type="SAM" id="MobiDB-lite"/>
    </source>
</evidence>
<evidence type="ECO:0000305" key="3"/>
<dbReference type="EMBL" id="AP006840">
    <property type="protein sequence ID" value="BAD42322.1"/>
    <property type="molecule type" value="Genomic_DNA"/>
</dbReference>
<dbReference type="SMR" id="Q67J28"/>
<dbReference type="STRING" id="292459.STH3341"/>
<dbReference type="KEGG" id="sth:STH3341"/>
<dbReference type="eggNOG" id="COG0230">
    <property type="taxonomic scope" value="Bacteria"/>
</dbReference>
<dbReference type="HOGENOM" id="CLU_129938_2_0_9"/>
<dbReference type="Proteomes" id="UP000000417">
    <property type="component" value="Chromosome"/>
</dbReference>
<dbReference type="GO" id="GO:1990904">
    <property type="term" value="C:ribonucleoprotein complex"/>
    <property type="evidence" value="ECO:0007669"/>
    <property type="project" value="UniProtKB-KW"/>
</dbReference>
<dbReference type="GO" id="GO:0005840">
    <property type="term" value="C:ribosome"/>
    <property type="evidence" value="ECO:0007669"/>
    <property type="project" value="UniProtKB-KW"/>
</dbReference>
<dbReference type="GO" id="GO:0003735">
    <property type="term" value="F:structural constituent of ribosome"/>
    <property type="evidence" value="ECO:0007669"/>
    <property type="project" value="InterPro"/>
</dbReference>
<dbReference type="GO" id="GO:0006412">
    <property type="term" value="P:translation"/>
    <property type="evidence" value="ECO:0007669"/>
    <property type="project" value="UniProtKB-UniRule"/>
</dbReference>
<dbReference type="FunFam" id="1.10.287.3980:FF:000001">
    <property type="entry name" value="Mitochondrial ribosomal protein L34"/>
    <property type="match status" value="1"/>
</dbReference>
<dbReference type="Gene3D" id="1.10.287.3980">
    <property type="match status" value="1"/>
</dbReference>
<dbReference type="HAMAP" id="MF_00391">
    <property type="entry name" value="Ribosomal_bL34"/>
    <property type="match status" value="1"/>
</dbReference>
<dbReference type="InterPro" id="IPR000271">
    <property type="entry name" value="Ribosomal_bL34"/>
</dbReference>
<dbReference type="InterPro" id="IPR020939">
    <property type="entry name" value="Ribosomal_bL34_CS"/>
</dbReference>
<dbReference type="NCBIfam" id="TIGR01030">
    <property type="entry name" value="rpmH_bact"/>
    <property type="match status" value="1"/>
</dbReference>
<dbReference type="PANTHER" id="PTHR14503:SF4">
    <property type="entry name" value="LARGE RIBOSOMAL SUBUNIT PROTEIN BL34M"/>
    <property type="match status" value="1"/>
</dbReference>
<dbReference type="PANTHER" id="PTHR14503">
    <property type="entry name" value="MITOCHONDRIAL RIBOSOMAL PROTEIN 34 FAMILY MEMBER"/>
    <property type="match status" value="1"/>
</dbReference>
<dbReference type="Pfam" id="PF00468">
    <property type="entry name" value="Ribosomal_L34"/>
    <property type="match status" value="1"/>
</dbReference>
<dbReference type="PROSITE" id="PS00784">
    <property type="entry name" value="RIBOSOMAL_L34"/>
    <property type="match status" value="1"/>
</dbReference>
<proteinExistence type="inferred from homology"/>
<gene>
    <name evidence="1" type="primary">rpmH</name>
    <name type="ordered locus">STH3341</name>
</gene>
<reference key="1">
    <citation type="journal article" date="2004" name="Nucleic Acids Res.">
        <title>Genome sequence of Symbiobacterium thermophilum, an uncultivable bacterium that depends on microbial commensalism.</title>
        <authorList>
            <person name="Ueda K."/>
            <person name="Yamashita A."/>
            <person name="Ishikawa J."/>
            <person name="Shimada M."/>
            <person name="Watsuji T."/>
            <person name="Morimura K."/>
            <person name="Ikeda H."/>
            <person name="Hattori M."/>
            <person name="Beppu T."/>
        </authorList>
    </citation>
    <scope>NUCLEOTIDE SEQUENCE [LARGE SCALE GENOMIC DNA]</scope>
    <source>
        <strain>DSM 24528 / JCM 14929 / IAM 14863 / T</strain>
    </source>
</reference>
<protein>
    <recommendedName>
        <fullName evidence="1">Large ribosomal subunit protein bL34</fullName>
    </recommendedName>
    <alternativeName>
        <fullName evidence="3">50S ribosomal protein L34</fullName>
    </alternativeName>
</protein>
<organism>
    <name type="scientific">Symbiobacterium thermophilum (strain DSM 24528 / JCM 14929 / IAM 14863 / T)</name>
    <dbReference type="NCBI Taxonomy" id="292459"/>
    <lineage>
        <taxon>Bacteria</taxon>
        <taxon>Bacillati</taxon>
        <taxon>Bacillota</taxon>
        <taxon>Clostridia</taxon>
        <taxon>Eubacteriales</taxon>
        <taxon>Symbiobacteriaceae</taxon>
        <taxon>Symbiobacterium</taxon>
    </lineage>
</organism>
<sequence>MFLLKRTFQPHNRSRKRTHGFLSRMSTRGGRRVLKARRLKGRKRLTV</sequence>
<feature type="chain" id="PRO_0000187482" description="Large ribosomal subunit protein bL34">
    <location>
        <begin position="1"/>
        <end position="47"/>
    </location>
</feature>
<feature type="region of interest" description="Disordered" evidence="2">
    <location>
        <begin position="9"/>
        <end position="47"/>
    </location>
</feature>
<feature type="compositionally biased region" description="Basic residues" evidence="2">
    <location>
        <begin position="29"/>
        <end position="47"/>
    </location>
</feature>
<name>RL34_SYMTH</name>